<proteinExistence type="inferred from homology"/>
<gene>
    <name evidence="1" type="primary">lldD</name>
    <name type="ordered locus">KPN78578_39100</name>
    <name type="ORF">KPN_03949</name>
</gene>
<accession>A6TFK0</accession>
<name>LLDD_KLEP7</name>
<organism>
    <name type="scientific">Klebsiella pneumoniae subsp. pneumoniae (strain ATCC 700721 / MGH 78578)</name>
    <dbReference type="NCBI Taxonomy" id="272620"/>
    <lineage>
        <taxon>Bacteria</taxon>
        <taxon>Pseudomonadati</taxon>
        <taxon>Pseudomonadota</taxon>
        <taxon>Gammaproteobacteria</taxon>
        <taxon>Enterobacterales</taxon>
        <taxon>Enterobacteriaceae</taxon>
        <taxon>Klebsiella/Raoultella group</taxon>
        <taxon>Klebsiella</taxon>
        <taxon>Klebsiella pneumoniae complex</taxon>
    </lineage>
</organism>
<dbReference type="EC" id="1.1.-.-" evidence="1"/>
<dbReference type="EMBL" id="CP000647">
    <property type="protein sequence ID" value="ABR79334.1"/>
    <property type="molecule type" value="Genomic_DNA"/>
</dbReference>
<dbReference type="RefSeq" id="WP_002922420.1">
    <property type="nucleotide sequence ID" value="NC_009648.1"/>
</dbReference>
<dbReference type="SMR" id="A6TFK0"/>
<dbReference type="STRING" id="272620.KPN_03949"/>
<dbReference type="PaxDb" id="272620-KPN_03949"/>
<dbReference type="EnsemblBacteria" id="ABR79334">
    <property type="protein sequence ID" value="ABR79334"/>
    <property type="gene ID" value="KPN_03949"/>
</dbReference>
<dbReference type="KEGG" id="kpn:KPN_03949"/>
<dbReference type="HOGENOM" id="CLU_020639_0_0_6"/>
<dbReference type="Proteomes" id="UP000000265">
    <property type="component" value="Chromosome"/>
</dbReference>
<dbReference type="GO" id="GO:0005886">
    <property type="term" value="C:plasma membrane"/>
    <property type="evidence" value="ECO:0007669"/>
    <property type="project" value="UniProtKB-SubCell"/>
</dbReference>
<dbReference type="GO" id="GO:0010181">
    <property type="term" value="F:FMN binding"/>
    <property type="evidence" value="ECO:0007669"/>
    <property type="project" value="InterPro"/>
</dbReference>
<dbReference type="GO" id="GO:0004459">
    <property type="term" value="F:L-lactate dehydrogenase activity"/>
    <property type="evidence" value="ECO:0007669"/>
    <property type="project" value="UniProtKB-UniRule"/>
</dbReference>
<dbReference type="GO" id="GO:0009060">
    <property type="term" value="P:aerobic respiration"/>
    <property type="evidence" value="ECO:0007669"/>
    <property type="project" value="TreeGrafter"/>
</dbReference>
<dbReference type="GO" id="GO:0006089">
    <property type="term" value="P:lactate metabolic process"/>
    <property type="evidence" value="ECO:0007669"/>
    <property type="project" value="UniProtKB-UniRule"/>
</dbReference>
<dbReference type="CDD" id="cd02809">
    <property type="entry name" value="alpha_hydroxyacid_oxid_FMN"/>
    <property type="match status" value="1"/>
</dbReference>
<dbReference type="FunFam" id="3.20.20.70:FF:000029">
    <property type="entry name" value="L-lactate dehydrogenase"/>
    <property type="match status" value="1"/>
</dbReference>
<dbReference type="Gene3D" id="3.20.20.70">
    <property type="entry name" value="Aldolase class I"/>
    <property type="match status" value="1"/>
</dbReference>
<dbReference type="HAMAP" id="MF_01559">
    <property type="entry name" value="L_lact_dehydr"/>
    <property type="match status" value="1"/>
</dbReference>
<dbReference type="InterPro" id="IPR013785">
    <property type="entry name" value="Aldolase_TIM"/>
</dbReference>
<dbReference type="InterPro" id="IPR012133">
    <property type="entry name" value="Alpha-hydoxy_acid_DH_FMN"/>
</dbReference>
<dbReference type="InterPro" id="IPR000262">
    <property type="entry name" value="FMN-dep_DH"/>
</dbReference>
<dbReference type="InterPro" id="IPR037396">
    <property type="entry name" value="FMN_HAD"/>
</dbReference>
<dbReference type="InterPro" id="IPR008259">
    <property type="entry name" value="FMN_hydac_DH_AS"/>
</dbReference>
<dbReference type="InterPro" id="IPR020920">
    <property type="entry name" value="LldD"/>
</dbReference>
<dbReference type="NCBIfam" id="NF033901">
    <property type="entry name" value="L_lactate_LldD"/>
    <property type="match status" value="1"/>
</dbReference>
<dbReference type="NCBIfam" id="NF008398">
    <property type="entry name" value="PRK11197.1"/>
    <property type="match status" value="1"/>
</dbReference>
<dbReference type="PANTHER" id="PTHR10578:SF85">
    <property type="entry name" value="L-LACTATE DEHYDROGENASE"/>
    <property type="match status" value="1"/>
</dbReference>
<dbReference type="PANTHER" id="PTHR10578">
    <property type="entry name" value="S -2-HYDROXY-ACID OXIDASE-RELATED"/>
    <property type="match status" value="1"/>
</dbReference>
<dbReference type="Pfam" id="PF01070">
    <property type="entry name" value="FMN_dh"/>
    <property type="match status" value="1"/>
</dbReference>
<dbReference type="PIRSF" id="PIRSF000138">
    <property type="entry name" value="Al-hdrx_acd_dh"/>
    <property type="match status" value="1"/>
</dbReference>
<dbReference type="SUPFAM" id="SSF51395">
    <property type="entry name" value="FMN-linked oxidoreductases"/>
    <property type="match status" value="1"/>
</dbReference>
<dbReference type="PROSITE" id="PS00557">
    <property type="entry name" value="FMN_HYDROXY_ACID_DH_1"/>
    <property type="match status" value="1"/>
</dbReference>
<dbReference type="PROSITE" id="PS51349">
    <property type="entry name" value="FMN_HYDROXY_ACID_DH_2"/>
    <property type="match status" value="1"/>
</dbReference>
<comment type="function">
    <text evidence="1">Catalyzes the conversion of L-lactate to pyruvate. Is coupled to the respiratory chain.</text>
</comment>
<comment type="catalytic activity">
    <reaction evidence="1">
        <text>(S)-lactate + A = pyruvate + AH2</text>
        <dbReference type="Rhea" id="RHEA:45816"/>
        <dbReference type="ChEBI" id="CHEBI:13193"/>
        <dbReference type="ChEBI" id="CHEBI:15361"/>
        <dbReference type="ChEBI" id="CHEBI:16651"/>
        <dbReference type="ChEBI" id="CHEBI:17499"/>
    </reaction>
</comment>
<comment type="cofactor">
    <cofactor evidence="1">
        <name>FMN</name>
        <dbReference type="ChEBI" id="CHEBI:58210"/>
    </cofactor>
</comment>
<comment type="subcellular location">
    <subcellularLocation>
        <location evidence="1">Cell inner membrane</location>
        <topology evidence="1">Peripheral membrane protein</topology>
    </subcellularLocation>
</comment>
<comment type="similarity">
    <text evidence="1">Belongs to the FMN-dependent alpha-hydroxy acid dehydrogenase family.</text>
</comment>
<reference key="1">
    <citation type="submission" date="2006-09" db="EMBL/GenBank/DDBJ databases">
        <authorList>
            <consortium name="The Klebsiella pneumonia Genome Sequencing Project"/>
            <person name="McClelland M."/>
            <person name="Sanderson E.K."/>
            <person name="Spieth J."/>
            <person name="Clifton W.S."/>
            <person name="Latreille P."/>
            <person name="Sabo A."/>
            <person name="Pepin K."/>
            <person name="Bhonagiri V."/>
            <person name="Porwollik S."/>
            <person name="Ali J."/>
            <person name="Wilson R.K."/>
        </authorList>
    </citation>
    <scope>NUCLEOTIDE SEQUENCE [LARGE SCALE GENOMIC DNA]</scope>
    <source>
        <strain>ATCC 700721 / MGH 78578</strain>
    </source>
</reference>
<evidence type="ECO:0000255" key="1">
    <source>
        <dbReference type="HAMAP-Rule" id="MF_01559"/>
    </source>
</evidence>
<feature type="chain" id="PRO_1000068987" description="L-lactate dehydrogenase">
    <location>
        <begin position="1"/>
        <end position="394"/>
    </location>
</feature>
<feature type="domain" description="FMN hydroxy acid dehydrogenase" evidence="1">
    <location>
        <begin position="1"/>
        <end position="380"/>
    </location>
</feature>
<feature type="active site" description="Proton acceptor" evidence="1">
    <location>
        <position position="275"/>
    </location>
</feature>
<feature type="binding site" evidence="1">
    <location>
        <position position="24"/>
    </location>
    <ligand>
        <name>substrate</name>
    </ligand>
</feature>
<feature type="binding site" evidence="1">
    <location>
        <position position="106"/>
    </location>
    <ligand>
        <name>FMN</name>
        <dbReference type="ChEBI" id="CHEBI:58210"/>
    </ligand>
</feature>
<feature type="binding site" evidence="1">
    <location>
        <position position="127"/>
    </location>
    <ligand>
        <name>FMN</name>
        <dbReference type="ChEBI" id="CHEBI:58210"/>
    </ligand>
</feature>
<feature type="binding site" evidence="1">
    <location>
        <position position="129"/>
    </location>
    <ligand>
        <name>substrate</name>
    </ligand>
</feature>
<feature type="binding site" evidence="1">
    <location>
        <position position="155"/>
    </location>
    <ligand>
        <name>FMN</name>
        <dbReference type="ChEBI" id="CHEBI:58210"/>
    </ligand>
</feature>
<feature type="binding site" evidence="1">
    <location>
        <position position="164"/>
    </location>
    <ligand>
        <name>substrate</name>
    </ligand>
</feature>
<feature type="binding site" evidence="1">
    <location>
        <position position="251"/>
    </location>
    <ligand>
        <name>FMN</name>
        <dbReference type="ChEBI" id="CHEBI:58210"/>
    </ligand>
</feature>
<feature type="binding site" evidence="1">
    <location>
        <position position="278"/>
    </location>
    <ligand>
        <name>substrate</name>
    </ligand>
</feature>
<feature type="binding site" evidence="1">
    <location>
        <begin position="306"/>
        <end position="330"/>
    </location>
    <ligand>
        <name>FMN</name>
        <dbReference type="ChEBI" id="CHEBI:58210"/>
    </ligand>
</feature>
<keyword id="KW-0997">Cell inner membrane</keyword>
<keyword id="KW-1003">Cell membrane</keyword>
<keyword id="KW-0285">Flavoprotein</keyword>
<keyword id="KW-0288">FMN</keyword>
<keyword id="KW-0472">Membrane</keyword>
<keyword id="KW-0560">Oxidoreductase</keyword>
<sequence length="394" mass="43008">MIISAASDYRAAAQRILPPFLFHYIDGGAYAEHTLRRNVEDLSDVALRQRILRNMSDLSLETTLFNEKLAMPTALAPVGLCGMYARRGEVQAAGAADDKGIPFTLSTVSVCPIEEVAPTIKRPMWFQLYVLRDRGFMRNALERAKAAGCSTLVFTVDMPTPGARYRDAHSGMSGPNAALRRYWQAVTHPQWAWDVGLNGRPHDLGNISAYLGKPTGLEDYIGWLANNFDPSISWKDLEWIRDFWDGPMVIKGILDPEDARDAVRFGADGIVVSNHGGRQLDGVLSSARALPAIADAVKGDITILADSGIRNGLDVVRMIALGADSVLLGRAYLYALATHGKQGVANLLNLIEKEMKVAMTLTGAKSIREISRDSLVQNAEALQTFDALKQNNAA</sequence>
<protein>
    <recommendedName>
        <fullName evidence="1">L-lactate dehydrogenase</fullName>
        <ecNumber evidence="1">1.1.-.-</ecNumber>
    </recommendedName>
</protein>